<comment type="function">
    <text evidence="1">Component of the FACT complex, a general chromatin factor that acts to reorganize nucleosomes. The FACT complex is involved in multiple processes that require DNA as a template such as mRNA elongation, DNA replication and DNA repair. During transcription elongation the FACT complex acts as a histone chaperone that both destabilizes and restores nucleosomal structure. It facilitates the passage of RNA polymerase II and transcription by promoting the dissociation of one histone H2A-H2B dimer from the nucleosome, then subsequently promotes the reestablishment of the nucleosome following the passage of RNA polymerase II (By similarity).</text>
</comment>
<comment type="subunit">
    <text evidence="1 3">Forms a stable heterodimer with spt16 (By similarity). The spt16-pob3 dimer weakly associates with multiple molecules of nhp6 to form the FACT complex (By similarity). Interacts with abo1 (PubMed:26582768).</text>
</comment>
<comment type="subcellular location">
    <subcellularLocation>
        <location evidence="1">Nucleus</location>
    </subcellularLocation>
    <subcellularLocation>
        <location evidence="1">Chromosome</location>
    </subcellularLocation>
    <text evidence="1">Colocalizes with RNA polymerase II on chromatin. Recruited to actively transcribed loci.</text>
</comment>
<comment type="disruption phenotype">
    <text evidence="3">Sensitive to methyl methanesulfonate (DNA damaging agent).</text>
</comment>
<comment type="miscellaneous">
    <text>In contrast to the orthologous protein in animals and plants, this protein does not contain a HMG box DNA-binding domain. This function may instead be provided by the HMG box of the associated nhp6 protein in the FACT complex of fungi.</text>
</comment>
<comment type="similarity">
    <text evidence="4">Belongs to the SSRP1 family.</text>
</comment>
<keyword id="KW-0158">Chromosome</keyword>
<keyword id="KW-0227">DNA damage</keyword>
<keyword id="KW-0234">DNA repair</keyword>
<keyword id="KW-0235">DNA replication</keyword>
<keyword id="KW-0539">Nucleus</keyword>
<keyword id="KW-1185">Reference proteome</keyword>
<keyword id="KW-0804">Transcription</keyword>
<keyword id="KW-0805">Transcription regulation</keyword>
<reference key="1">
    <citation type="journal article" date="2002" name="Nature">
        <title>The genome sequence of Schizosaccharomyces pombe.</title>
        <authorList>
            <person name="Wood V."/>
            <person name="Gwilliam R."/>
            <person name="Rajandream M.A."/>
            <person name="Lyne M.H."/>
            <person name="Lyne R."/>
            <person name="Stewart A."/>
            <person name="Sgouros J.G."/>
            <person name="Peat N."/>
            <person name="Hayles J."/>
            <person name="Baker S.G."/>
            <person name="Basham D."/>
            <person name="Bowman S."/>
            <person name="Brooks K."/>
            <person name="Brown D."/>
            <person name="Brown S."/>
            <person name="Chillingworth T."/>
            <person name="Churcher C.M."/>
            <person name="Collins M."/>
            <person name="Connor R."/>
            <person name="Cronin A."/>
            <person name="Davis P."/>
            <person name="Feltwell T."/>
            <person name="Fraser A."/>
            <person name="Gentles S."/>
            <person name="Goble A."/>
            <person name="Hamlin N."/>
            <person name="Harris D.E."/>
            <person name="Hidalgo J."/>
            <person name="Hodgson G."/>
            <person name="Holroyd S."/>
            <person name="Hornsby T."/>
            <person name="Howarth S."/>
            <person name="Huckle E.J."/>
            <person name="Hunt S."/>
            <person name="Jagels K."/>
            <person name="James K.D."/>
            <person name="Jones L."/>
            <person name="Jones M."/>
            <person name="Leather S."/>
            <person name="McDonald S."/>
            <person name="McLean J."/>
            <person name="Mooney P."/>
            <person name="Moule S."/>
            <person name="Mungall K.L."/>
            <person name="Murphy L.D."/>
            <person name="Niblett D."/>
            <person name="Odell C."/>
            <person name="Oliver K."/>
            <person name="O'Neil S."/>
            <person name="Pearson D."/>
            <person name="Quail M.A."/>
            <person name="Rabbinowitsch E."/>
            <person name="Rutherford K.M."/>
            <person name="Rutter S."/>
            <person name="Saunders D."/>
            <person name="Seeger K."/>
            <person name="Sharp S."/>
            <person name="Skelton J."/>
            <person name="Simmonds M.N."/>
            <person name="Squares R."/>
            <person name="Squares S."/>
            <person name="Stevens K."/>
            <person name="Taylor K."/>
            <person name="Taylor R.G."/>
            <person name="Tivey A."/>
            <person name="Walsh S.V."/>
            <person name="Warren T."/>
            <person name="Whitehead S."/>
            <person name="Woodward J.R."/>
            <person name="Volckaert G."/>
            <person name="Aert R."/>
            <person name="Robben J."/>
            <person name="Grymonprez B."/>
            <person name="Weltjens I."/>
            <person name="Vanstreels E."/>
            <person name="Rieger M."/>
            <person name="Schaefer M."/>
            <person name="Mueller-Auer S."/>
            <person name="Gabel C."/>
            <person name="Fuchs M."/>
            <person name="Duesterhoeft A."/>
            <person name="Fritzc C."/>
            <person name="Holzer E."/>
            <person name="Moestl D."/>
            <person name="Hilbert H."/>
            <person name="Borzym K."/>
            <person name="Langer I."/>
            <person name="Beck A."/>
            <person name="Lehrach H."/>
            <person name="Reinhardt R."/>
            <person name="Pohl T.M."/>
            <person name="Eger P."/>
            <person name="Zimmermann W."/>
            <person name="Wedler H."/>
            <person name="Wambutt R."/>
            <person name="Purnelle B."/>
            <person name="Goffeau A."/>
            <person name="Cadieu E."/>
            <person name="Dreano S."/>
            <person name="Gloux S."/>
            <person name="Lelaure V."/>
            <person name="Mottier S."/>
            <person name="Galibert F."/>
            <person name="Aves S.J."/>
            <person name="Xiang Z."/>
            <person name="Hunt C."/>
            <person name="Moore K."/>
            <person name="Hurst S.M."/>
            <person name="Lucas M."/>
            <person name="Rochet M."/>
            <person name="Gaillardin C."/>
            <person name="Tallada V.A."/>
            <person name="Garzon A."/>
            <person name="Thode G."/>
            <person name="Daga R.R."/>
            <person name="Cruzado L."/>
            <person name="Jimenez J."/>
            <person name="Sanchez M."/>
            <person name="del Rey F."/>
            <person name="Benito J."/>
            <person name="Dominguez A."/>
            <person name="Revuelta J.L."/>
            <person name="Moreno S."/>
            <person name="Armstrong J."/>
            <person name="Forsburg S.L."/>
            <person name="Cerutti L."/>
            <person name="Lowe T."/>
            <person name="McCombie W.R."/>
            <person name="Paulsen I."/>
            <person name="Potashkin J."/>
            <person name="Shpakovski G.V."/>
            <person name="Ussery D."/>
            <person name="Barrell B.G."/>
            <person name="Nurse P."/>
        </authorList>
    </citation>
    <scope>NUCLEOTIDE SEQUENCE [LARGE SCALE GENOMIC DNA]</scope>
    <source>
        <strain>972 / ATCC 24843</strain>
    </source>
</reference>
<reference key="2">
    <citation type="journal article" date="2016" name="EMBO Rep.">
        <title>Abo1, a conserved bromodomain AAA-ATPase, maintains global nucleosome occupancy and organisation.</title>
        <authorList>
            <person name="Gal C."/>
            <person name="Murton H.E."/>
            <person name="Subramanian L."/>
            <person name="Whale A.J."/>
            <person name="Moore K.M."/>
            <person name="Paszkiewicz K."/>
            <person name="Codlin S."/>
            <person name="Baehler J."/>
            <person name="Creamer K.M."/>
            <person name="Partridge J.F."/>
            <person name="Allshire R.C."/>
            <person name="Kent N.A."/>
            <person name="Whitehall S.K."/>
        </authorList>
    </citation>
    <scope>INTERACTION WITH ABO1</scope>
    <scope>DISRUPTION PHENOTYPE</scope>
</reference>
<protein>
    <recommendedName>
        <fullName evidence="4">FACT complex subunit pob3</fullName>
    </recommendedName>
    <alternativeName>
        <fullName>Facilitates chromatin transcription complex subunit pob3</fullName>
    </alternativeName>
</protein>
<name>POB3_SCHPO</name>
<evidence type="ECO:0000250" key="1">
    <source>
        <dbReference type="UniProtKB" id="Q04636"/>
    </source>
</evidence>
<evidence type="ECO:0000256" key="2">
    <source>
        <dbReference type="SAM" id="MobiDB-lite"/>
    </source>
</evidence>
<evidence type="ECO:0000269" key="3">
    <source>
    </source>
</evidence>
<evidence type="ECO:0000305" key="4"/>
<evidence type="ECO:0000312" key="5">
    <source>
        <dbReference type="PomBase" id="SPBC609.05"/>
    </source>
</evidence>
<sequence length="512" mass="57457">MAAKTVQYDNIYLNLSEKPGKLRIAPSGLGWKSPSLAEPFTLPISEIRRFCWSRFARGYELKIILKSKDPVSLDGFSQEDLDDLINVIKQNFDMGIEQKEFSIKGWNWGEANFLGSELVFDVNSRPAFEIPISAVTNTNLSGKNEVALEFSTTDDKQIPSAQVDELVEMRLYVPGTTAKEDAADGEEVEQNAANLFYESLKERADIGQAAGDAIVSFSEILLLTPRGRYDIDMYETCMRLRGKTYDYKVEYSSINSLFLLPKPDEQHVVFVIGLEPPLRQGQTRYPFLVTQFVRDEDMEVDLNIEETVLKEKYADKVKASYDQPAFEVVSQIFRGLTGRKVTTPAEFLSHEGHAAVKCSYKANEGQLYCLDKSFLFIPKPTLLMNTSDITRVTLSRVGMSVSAARTFDLTFTLRSGTSYQFSNINRVEQSALVAFLESKQIKIHNDLADETQQTLLTSALDDEDEEGDEEMEEALSEDEDFQAESESDVAEEYDENAESSDEEGASGAEGSE</sequence>
<accession>O94529</accession>
<dbReference type="EMBL" id="CU329671">
    <property type="protein sequence ID" value="CAA22834.1"/>
    <property type="molecule type" value="Genomic_DNA"/>
</dbReference>
<dbReference type="PIR" id="T40576">
    <property type="entry name" value="T40576"/>
</dbReference>
<dbReference type="RefSeq" id="NP_596315.1">
    <property type="nucleotide sequence ID" value="NM_001022237.2"/>
</dbReference>
<dbReference type="SMR" id="O94529"/>
<dbReference type="BioGRID" id="277603">
    <property type="interactions" value="237"/>
</dbReference>
<dbReference type="FunCoup" id="O94529">
    <property type="interactions" value="842"/>
</dbReference>
<dbReference type="STRING" id="284812.O94529"/>
<dbReference type="iPTMnet" id="O94529"/>
<dbReference type="PaxDb" id="4896-SPBC609.05.1"/>
<dbReference type="EnsemblFungi" id="SPBC609.05.1">
    <property type="protein sequence ID" value="SPBC609.05.1:pep"/>
    <property type="gene ID" value="SPBC609.05"/>
</dbReference>
<dbReference type="GeneID" id="2541088"/>
<dbReference type="KEGG" id="spo:2541088"/>
<dbReference type="PomBase" id="SPBC609.05">
    <property type="gene designation" value="pob3"/>
</dbReference>
<dbReference type="VEuPathDB" id="FungiDB:SPBC609.05"/>
<dbReference type="eggNOG" id="KOG0526">
    <property type="taxonomic scope" value="Eukaryota"/>
</dbReference>
<dbReference type="HOGENOM" id="CLU_017374_3_0_1"/>
<dbReference type="InParanoid" id="O94529"/>
<dbReference type="OMA" id="QVVTKIF"/>
<dbReference type="PhylomeDB" id="O94529"/>
<dbReference type="Reactome" id="R-SPO-674695">
    <property type="pathway name" value="RNA Polymerase II Pre-transcription Events"/>
</dbReference>
<dbReference type="Reactome" id="R-SPO-6796648">
    <property type="pathway name" value="TP53 Regulates Transcription of DNA Repair Genes"/>
</dbReference>
<dbReference type="Reactome" id="R-SPO-6804756">
    <property type="pathway name" value="Regulation of TP53 Activity through Phosphorylation"/>
</dbReference>
<dbReference type="PRO" id="PR:O94529"/>
<dbReference type="Proteomes" id="UP000002485">
    <property type="component" value="Chromosome II"/>
</dbReference>
<dbReference type="GO" id="GO:0000781">
    <property type="term" value="C:chromosome, telomeric region"/>
    <property type="evidence" value="ECO:0007669"/>
    <property type="project" value="GOC"/>
</dbReference>
<dbReference type="GO" id="GO:0005829">
    <property type="term" value="C:cytosol"/>
    <property type="evidence" value="ECO:0007005"/>
    <property type="project" value="PomBase"/>
</dbReference>
<dbReference type="GO" id="GO:0000791">
    <property type="term" value="C:euchromatin"/>
    <property type="evidence" value="ECO:0000269"/>
    <property type="project" value="PomBase"/>
</dbReference>
<dbReference type="GO" id="GO:0035101">
    <property type="term" value="C:FACT complex"/>
    <property type="evidence" value="ECO:0000314"/>
    <property type="project" value="PomBase"/>
</dbReference>
<dbReference type="GO" id="GO:0043596">
    <property type="term" value="C:nuclear replication fork"/>
    <property type="evidence" value="ECO:0000250"/>
    <property type="project" value="PomBase"/>
</dbReference>
<dbReference type="GO" id="GO:0005634">
    <property type="term" value="C:nucleus"/>
    <property type="evidence" value="ECO:0000314"/>
    <property type="project" value="PomBase"/>
</dbReference>
<dbReference type="GO" id="GO:0003677">
    <property type="term" value="F:DNA binding"/>
    <property type="evidence" value="ECO:0000255"/>
    <property type="project" value="PomBase"/>
</dbReference>
<dbReference type="GO" id="GO:0000511">
    <property type="term" value="F:H2A-H2B histone complex chaperone activity"/>
    <property type="evidence" value="ECO:0000269"/>
    <property type="project" value="PomBase"/>
</dbReference>
<dbReference type="GO" id="GO:0042393">
    <property type="term" value="F:histone binding"/>
    <property type="evidence" value="ECO:0000318"/>
    <property type="project" value="GO_Central"/>
</dbReference>
<dbReference type="GO" id="GO:0031491">
    <property type="term" value="F:nucleosome binding"/>
    <property type="evidence" value="ECO:0000269"/>
    <property type="project" value="PomBase"/>
</dbReference>
<dbReference type="GO" id="GO:0140719">
    <property type="term" value="P:constitutive heterochromatin formation"/>
    <property type="evidence" value="ECO:0000315"/>
    <property type="project" value="PomBase"/>
</dbReference>
<dbReference type="GO" id="GO:0006281">
    <property type="term" value="P:DNA repair"/>
    <property type="evidence" value="ECO:0007669"/>
    <property type="project" value="UniProtKB-KW"/>
</dbReference>
<dbReference type="GO" id="GO:0006260">
    <property type="term" value="P:DNA replication"/>
    <property type="evidence" value="ECO:0007669"/>
    <property type="project" value="UniProtKB-KW"/>
</dbReference>
<dbReference type="GO" id="GO:0006335">
    <property type="term" value="P:DNA replication-dependent chromatin assembly"/>
    <property type="evidence" value="ECO:0000314"/>
    <property type="project" value="PomBase"/>
</dbReference>
<dbReference type="GO" id="GO:0034728">
    <property type="term" value="P:nucleosome organization"/>
    <property type="evidence" value="ECO:0000315"/>
    <property type="project" value="PomBase"/>
</dbReference>
<dbReference type="GO" id="GO:0031508">
    <property type="term" value="P:pericentric heterochromatin formation"/>
    <property type="evidence" value="ECO:0000314"/>
    <property type="project" value="PomBase"/>
</dbReference>
<dbReference type="GO" id="GO:0030466">
    <property type="term" value="P:silent mating-type cassette heterochromatin formation"/>
    <property type="evidence" value="ECO:0000315"/>
    <property type="project" value="PomBase"/>
</dbReference>
<dbReference type="GO" id="GO:0031509">
    <property type="term" value="P:subtelomeric heterochromatin formation"/>
    <property type="evidence" value="ECO:0000314"/>
    <property type="project" value="PomBase"/>
</dbReference>
<dbReference type="GO" id="GO:0140673">
    <property type="term" value="P:transcription elongation-coupled chromatin remodeling"/>
    <property type="evidence" value="ECO:0000304"/>
    <property type="project" value="PomBase"/>
</dbReference>
<dbReference type="CDD" id="cd13230">
    <property type="entry name" value="PH1_SSRP1-like"/>
    <property type="match status" value="1"/>
</dbReference>
<dbReference type="CDD" id="cd13231">
    <property type="entry name" value="PH2_SSRP1-like"/>
    <property type="match status" value="1"/>
</dbReference>
<dbReference type="CDD" id="cd13229">
    <property type="entry name" value="PH_TFIIH"/>
    <property type="match status" value="1"/>
</dbReference>
<dbReference type="FunFam" id="2.30.29.150:FF:000001">
    <property type="entry name" value="Fact complex subunit ssrp1"/>
    <property type="match status" value="1"/>
</dbReference>
<dbReference type="Gene3D" id="2.30.29.150">
    <property type="match status" value="1"/>
</dbReference>
<dbReference type="Gene3D" id="2.30.29.30">
    <property type="entry name" value="Pleckstrin-homology domain (PH domain)/Phosphotyrosine-binding domain (PTB)"/>
    <property type="match status" value="2"/>
</dbReference>
<dbReference type="Gene3D" id="2.30.29.220">
    <property type="entry name" value="Structure-specific recognition protein (SSRP1)"/>
    <property type="match status" value="1"/>
</dbReference>
<dbReference type="InterPro" id="IPR011993">
    <property type="entry name" value="PH-like_dom_sf"/>
</dbReference>
<dbReference type="InterPro" id="IPR013719">
    <property type="entry name" value="RTT106/SPT16-like_middle_dom"/>
</dbReference>
<dbReference type="InterPro" id="IPR050454">
    <property type="entry name" value="RTT106/SSRP1_HistChap/FACT"/>
</dbReference>
<dbReference type="InterPro" id="IPR048993">
    <property type="entry name" value="SSRP1-like_PH1"/>
</dbReference>
<dbReference type="InterPro" id="IPR000969">
    <property type="entry name" value="SSRP1/POB3"/>
</dbReference>
<dbReference type="InterPro" id="IPR035417">
    <property type="entry name" value="SSRP1/POB3_N"/>
</dbReference>
<dbReference type="InterPro" id="IPR024954">
    <property type="entry name" value="SSRP1_DD"/>
</dbReference>
<dbReference type="InterPro" id="IPR038167">
    <property type="entry name" value="SSRP1_sf"/>
</dbReference>
<dbReference type="PANTHER" id="PTHR45849">
    <property type="entry name" value="FACT COMPLEX SUBUNIT SSRP1"/>
    <property type="match status" value="1"/>
</dbReference>
<dbReference type="PANTHER" id="PTHR45849:SF1">
    <property type="entry name" value="FACT COMPLEX SUBUNIT SSRP1"/>
    <property type="match status" value="1"/>
</dbReference>
<dbReference type="Pfam" id="PF21103">
    <property type="entry name" value="PH1_SSRP1-like"/>
    <property type="match status" value="1"/>
</dbReference>
<dbReference type="Pfam" id="PF17292">
    <property type="entry name" value="POB3_N"/>
    <property type="match status" value="1"/>
</dbReference>
<dbReference type="Pfam" id="PF08512">
    <property type="entry name" value="Rttp106-like_middle"/>
    <property type="match status" value="1"/>
</dbReference>
<dbReference type="Pfam" id="PF03531">
    <property type="entry name" value="SSrecog"/>
    <property type="match status" value="1"/>
</dbReference>
<dbReference type="PRINTS" id="PR00887">
    <property type="entry name" value="SSRCOGNITION"/>
</dbReference>
<dbReference type="SMART" id="SM01287">
    <property type="entry name" value="Rtt106"/>
    <property type="match status" value="1"/>
</dbReference>
<dbReference type="SUPFAM" id="SSF50729">
    <property type="entry name" value="PH domain-like"/>
    <property type="match status" value="1"/>
</dbReference>
<gene>
    <name evidence="5" type="primary">pob3</name>
    <name evidence="5" type="ORF">SPBC609.05</name>
</gene>
<proteinExistence type="evidence at protein level"/>
<organism>
    <name type="scientific">Schizosaccharomyces pombe (strain 972 / ATCC 24843)</name>
    <name type="common">Fission yeast</name>
    <dbReference type="NCBI Taxonomy" id="284812"/>
    <lineage>
        <taxon>Eukaryota</taxon>
        <taxon>Fungi</taxon>
        <taxon>Dikarya</taxon>
        <taxon>Ascomycota</taxon>
        <taxon>Taphrinomycotina</taxon>
        <taxon>Schizosaccharomycetes</taxon>
        <taxon>Schizosaccharomycetales</taxon>
        <taxon>Schizosaccharomycetaceae</taxon>
        <taxon>Schizosaccharomyces</taxon>
    </lineage>
</organism>
<feature type="chain" id="PRO_0000245210" description="FACT complex subunit pob3">
    <location>
        <begin position="1"/>
        <end position="512"/>
    </location>
</feature>
<feature type="region of interest" description="Disordered" evidence="2">
    <location>
        <begin position="460"/>
        <end position="512"/>
    </location>
</feature>
<feature type="compositionally biased region" description="Acidic residues" evidence="2">
    <location>
        <begin position="460"/>
        <end position="504"/>
    </location>
</feature>